<sequence length="53" mass="5520">MFRWGIIFLVIALIAAALGFGGLAGTAAGAAKIVFVVGIILFLLSLFTGRKRP</sequence>
<keyword id="KW-1003">Cell membrane</keyword>
<keyword id="KW-0472">Membrane</keyword>
<keyword id="KW-0812">Transmembrane</keyword>
<keyword id="KW-1133">Transmembrane helix</keyword>
<evidence type="ECO:0000255" key="1">
    <source>
        <dbReference type="HAMAP-Rule" id="MF_01361"/>
    </source>
</evidence>
<accession>C6DJU8</accession>
<dbReference type="EMBL" id="CP001657">
    <property type="protein sequence ID" value="ACT11511.1"/>
    <property type="molecule type" value="Genomic_DNA"/>
</dbReference>
<dbReference type="RefSeq" id="WP_012773166.1">
    <property type="nucleotide sequence ID" value="NC_012917.1"/>
</dbReference>
<dbReference type="STRING" id="561230.PC1_0455"/>
<dbReference type="KEGG" id="pct:PC1_0455"/>
<dbReference type="eggNOG" id="COG5487">
    <property type="taxonomic scope" value="Bacteria"/>
</dbReference>
<dbReference type="HOGENOM" id="CLU_187346_2_0_6"/>
<dbReference type="Proteomes" id="UP000002736">
    <property type="component" value="Chromosome"/>
</dbReference>
<dbReference type="GO" id="GO:0005886">
    <property type="term" value="C:plasma membrane"/>
    <property type="evidence" value="ECO:0007669"/>
    <property type="project" value="UniProtKB-SubCell"/>
</dbReference>
<dbReference type="HAMAP" id="MF_01361">
    <property type="entry name" value="UPF0391"/>
    <property type="match status" value="1"/>
</dbReference>
<dbReference type="InterPro" id="IPR009760">
    <property type="entry name" value="DUF1328"/>
</dbReference>
<dbReference type="NCBIfam" id="NF010229">
    <property type="entry name" value="PRK13682.1-4"/>
    <property type="match status" value="1"/>
</dbReference>
<dbReference type="NCBIfam" id="NF010230">
    <property type="entry name" value="PRK13682.1-5"/>
    <property type="match status" value="1"/>
</dbReference>
<dbReference type="Pfam" id="PF07043">
    <property type="entry name" value="DUF1328"/>
    <property type="match status" value="1"/>
</dbReference>
<dbReference type="PIRSF" id="PIRSF036466">
    <property type="entry name" value="UCP036466"/>
    <property type="match status" value="1"/>
</dbReference>
<feature type="chain" id="PRO_1000214876" description="UPF0391 membrane protein PC1_0455">
    <location>
        <begin position="1"/>
        <end position="53"/>
    </location>
</feature>
<feature type="transmembrane region" description="Helical" evidence="1">
    <location>
        <begin position="4"/>
        <end position="24"/>
    </location>
</feature>
<feature type="transmembrane region" description="Helical" evidence="1">
    <location>
        <begin position="30"/>
        <end position="47"/>
    </location>
</feature>
<protein>
    <recommendedName>
        <fullName evidence="1">UPF0391 membrane protein PC1_0455</fullName>
    </recommendedName>
</protein>
<organism>
    <name type="scientific">Pectobacterium carotovorum subsp. carotovorum (strain PC1)</name>
    <dbReference type="NCBI Taxonomy" id="561230"/>
    <lineage>
        <taxon>Bacteria</taxon>
        <taxon>Pseudomonadati</taxon>
        <taxon>Pseudomonadota</taxon>
        <taxon>Gammaproteobacteria</taxon>
        <taxon>Enterobacterales</taxon>
        <taxon>Pectobacteriaceae</taxon>
        <taxon>Pectobacterium</taxon>
    </lineage>
</organism>
<gene>
    <name type="ordered locus">PC1_0455</name>
</gene>
<name>Y455_PECCP</name>
<comment type="subcellular location">
    <subcellularLocation>
        <location evidence="1">Cell membrane</location>
        <topology evidence="1">Multi-pass membrane protein</topology>
    </subcellularLocation>
</comment>
<comment type="similarity">
    <text evidence="1">Belongs to the UPF0391 family.</text>
</comment>
<reference key="1">
    <citation type="submission" date="2009-07" db="EMBL/GenBank/DDBJ databases">
        <title>Complete sequence of Pectobacterium carotovorum subsp. carotovorum PC1.</title>
        <authorList>
            <consortium name="US DOE Joint Genome Institute"/>
            <person name="Lucas S."/>
            <person name="Copeland A."/>
            <person name="Lapidus A."/>
            <person name="Glavina del Rio T."/>
            <person name="Tice H."/>
            <person name="Bruce D."/>
            <person name="Goodwin L."/>
            <person name="Pitluck S."/>
            <person name="Munk A.C."/>
            <person name="Brettin T."/>
            <person name="Detter J.C."/>
            <person name="Han C."/>
            <person name="Tapia R."/>
            <person name="Larimer F."/>
            <person name="Land M."/>
            <person name="Hauser L."/>
            <person name="Kyrpides N."/>
            <person name="Mikhailova N."/>
            <person name="Balakrishnan V."/>
            <person name="Glasner J."/>
            <person name="Perna N.T."/>
        </authorList>
    </citation>
    <scope>NUCLEOTIDE SEQUENCE [LARGE SCALE GENOMIC DNA]</scope>
    <source>
        <strain>PC1</strain>
    </source>
</reference>
<proteinExistence type="inferred from homology"/>